<organism>
    <name type="scientific">Staphylococcus aureus (strain NCTC 8325 / PS 47)</name>
    <dbReference type="NCBI Taxonomy" id="93061"/>
    <lineage>
        <taxon>Bacteria</taxon>
        <taxon>Bacillati</taxon>
        <taxon>Bacillota</taxon>
        <taxon>Bacilli</taxon>
        <taxon>Bacillales</taxon>
        <taxon>Staphylococcaceae</taxon>
        <taxon>Staphylococcus</taxon>
    </lineage>
</organism>
<evidence type="ECO:0000255" key="1">
    <source>
        <dbReference type="HAMAP-Rule" id="MF_00822"/>
    </source>
</evidence>
<gene>
    <name evidence="1" type="primary">ureE</name>
    <name type="ordered locus">SAOUHSC_02562</name>
</gene>
<accession>Q2G2K8</accession>
<name>UREE_STAA8</name>
<comment type="function">
    <text evidence="1">Involved in urease metallocenter assembly. Binds nickel. Probably functions as a nickel donor during metallocenter assembly.</text>
</comment>
<comment type="subcellular location">
    <subcellularLocation>
        <location evidence="1">Cytoplasm</location>
    </subcellularLocation>
</comment>
<comment type="similarity">
    <text evidence="1">Belongs to the UreE family.</text>
</comment>
<dbReference type="EMBL" id="CP000253">
    <property type="protein sequence ID" value="ABD31574.1"/>
    <property type="molecule type" value="Genomic_DNA"/>
</dbReference>
<dbReference type="RefSeq" id="WP_000634589.1">
    <property type="nucleotide sequence ID" value="NZ_LS483365.1"/>
</dbReference>
<dbReference type="RefSeq" id="YP_501023.1">
    <property type="nucleotide sequence ID" value="NC_007795.1"/>
</dbReference>
<dbReference type="SMR" id="Q2G2K8"/>
<dbReference type="STRING" id="93061.SAOUHSC_02562"/>
<dbReference type="PaxDb" id="1280-SAXN108_2539"/>
<dbReference type="GeneID" id="3921559"/>
<dbReference type="KEGG" id="sao:SAOUHSC_02562"/>
<dbReference type="PATRIC" id="fig|93061.5.peg.2311"/>
<dbReference type="eggNOG" id="COG2371">
    <property type="taxonomic scope" value="Bacteria"/>
</dbReference>
<dbReference type="HOGENOM" id="CLU_093757_3_1_9"/>
<dbReference type="OrthoDB" id="9810882at2"/>
<dbReference type="PRO" id="PR:Q2G2K8"/>
<dbReference type="Proteomes" id="UP000008816">
    <property type="component" value="Chromosome"/>
</dbReference>
<dbReference type="GO" id="GO:0005737">
    <property type="term" value="C:cytoplasm"/>
    <property type="evidence" value="ECO:0007669"/>
    <property type="project" value="UniProtKB-SubCell"/>
</dbReference>
<dbReference type="GO" id="GO:0016151">
    <property type="term" value="F:nickel cation binding"/>
    <property type="evidence" value="ECO:0007669"/>
    <property type="project" value="UniProtKB-UniRule"/>
</dbReference>
<dbReference type="GO" id="GO:0051082">
    <property type="term" value="F:unfolded protein binding"/>
    <property type="evidence" value="ECO:0007669"/>
    <property type="project" value="UniProtKB-UniRule"/>
</dbReference>
<dbReference type="GO" id="GO:0006457">
    <property type="term" value="P:protein folding"/>
    <property type="evidence" value="ECO:0007669"/>
    <property type="project" value="InterPro"/>
</dbReference>
<dbReference type="GO" id="GO:0065003">
    <property type="term" value="P:protein-containing complex assembly"/>
    <property type="evidence" value="ECO:0007669"/>
    <property type="project" value="InterPro"/>
</dbReference>
<dbReference type="GO" id="GO:0019627">
    <property type="term" value="P:urea metabolic process"/>
    <property type="evidence" value="ECO:0007669"/>
    <property type="project" value="InterPro"/>
</dbReference>
<dbReference type="CDD" id="cd00571">
    <property type="entry name" value="UreE"/>
    <property type="match status" value="1"/>
</dbReference>
<dbReference type="Gene3D" id="2.60.260.20">
    <property type="entry name" value="Urease metallochaperone UreE, N-terminal domain"/>
    <property type="match status" value="1"/>
</dbReference>
<dbReference type="Gene3D" id="3.30.70.790">
    <property type="entry name" value="UreE, C-terminal domain"/>
    <property type="match status" value="1"/>
</dbReference>
<dbReference type="HAMAP" id="MF_00822">
    <property type="entry name" value="UreE"/>
    <property type="match status" value="1"/>
</dbReference>
<dbReference type="InterPro" id="IPR012406">
    <property type="entry name" value="UreE"/>
</dbReference>
<dbReference type="InterPro" id="IPR007864">
    <property type="entry name" value="UreE_C_dom"/>
</dbReference>
<dbReference type="InterPro" id="IPR004029">
    <property type="entry name" value="UreE_N"/>
</dbReference>
<dbReference type="InterPro" id="IPR036118">
    <property type="entry name" value="UreE_N_sf"/>
</dbReference>
<dbReference type="NCBIfam" id="NF009755">
    <property type="entry name" value="PRK13261.2-1"/>
    <property type="match status" value="1"/>
</dbReference>
<dbReference type="Pfam" id="PF05194">
    <property type="entry name" value="UreE_C"/>
    <property type="match status" value="1"/>
</dbReference>
<dbReference type="Pfam" id="PF02814">
    <property type="entry name" value="UreE_N"/>
    <property type="match status" value="1"/>
</dbReference>
<dbReference type="PIRSF" id="PIRSF036402">
    <property type="entry name" value="Ureas_acces_UreE"/>
    <property type="match status" value="1"/>
</dbReference>
<dbReference type="SMART" id="SM00988">
    <property type="entry name" value="UreE_N"/>
    <property type="match status" value="1"/>
</dbReference>
<dbReference type="SUPFAM" id="SSF69737">
    <property type="entry name" value="Urease metallochaperone UreE, C-terminal domain"/>
    <property type="match status" value="1"/>
</dbReference>
<dbReference type="SUPFAM" id="SSF69287">
    <property type="entry name" value="Urease metallochaperone UreE, N-terminal domain"/>
    <property type="match status" value="1"/>
</dbReference>
<feature type="chain" id="PRO_1000062563" description="Urease accessory protein UreE">
    <location>
        <begin position="1"/>
        <end position="150"/>
    </location>
</feature>
<reference key="1">
    <citation type="book" date="2006" name="Gram positive pathogens, 2nd edition">
        <title>The Staphylococcus aureus NCTC 8325 genome.</title>
        <editorList>
            <person name="Fischetti V."/>
            <person name="Novick R."/>
            <person name="Ferretti J."/>
            <person name="Portnoy D."/>
            <person name="Rood J."/>
        </editorList>
        <authorList>
            <person name="Gillaspy A.F."/>
            <person name="Worrell V."/>
            <person name="Orvis J."/>
            <person name="Roe B.A."/>
            <person name="Dyer D.W."/>
            <person name="Iandolo J.J."/>
        </authorList>
    </citation>
    <scope>NUCLEOTIDE SEQUENCE [LARGE SCALE GENOMIC DNA]</scope>
    <source>
        <strain>NCTC 8325 / PS 47</strain>
    </source>
</reference>
<protein>
    <recommendedName>
        <fullName evidence="1">Urease accessory protein UreE</fullName>
    </recommendedName>
</protein>
<proteinExistence type="inferred from homology"/>
<sequence length="150" mass="17340">MIVEEIQGNIANLSNSEKQKHVEKVYLENSDLVKRIQRVVTDHGTEIGIRLKQPIDLQYGDILYADDHNMIIVDVNSEDLLVIQPRTLQEMGDIAHQLGNRHLPAQFTETEMLVQYDYLVEDLLKSLGIPYVREDRKVNKAFRHIGHSHD</sequence>
<keyword id="KW-0143">Chaperone</keyword>
<keyword id="KW-0963">Cytoplasm</keyword>
<keyword id="KW-0533">Nickel</keyword>
<keyword id="KW-0996">Nickel insertion</keyword>
<keyword id="KW-1185">Reference proteome</keyword>